<name>PYRB_BARQU</name>
<feature type="chain" id="PRO_0000113102" description="Aspartate carbamoyltransferase catalytic subunit">
    <location>
        <begin position="1"/>
        <end position="321"/>
    </location>
</feature>
<feature type="binding site" evidence="1">
    <location>
        <position position="65"/>
    </location>
    <ligand>
        <name>carbamoyl phosphate</name>
        <dbReference type="ChEBI" id="CHEBI:58228"/>
    </ligand>
</feature>
<feature type="binding site" evidence="1">
    <location>
        <position position="66"/>
    </location>
    <ligand>
        <name>carbamoyl phosphate</name>
        <dbReference type="ChEBI" id="CHEBI:58228"/>
    </ligand>
</feature>
<feature type="binding site" evidence="1">
    <location>
        <position position="93"/>
    </location>
    <ligand>
        <name>L-aspartate</name>
        <dbReference type="ChEBI" id="CHEBI:29991"/>
    </ligand>
</feature>
<feature type="binding site" evidence="1">
    <location>
        <position position="115"/>
    </location>
    <ligand>
        <name>carbamoyl phosphate</name>
        <dbReference type="ChEBI" id="CHEBI:58228"/>
    </ligand>
</feature>
<feature type="binding site" evidence="1">
    <location>
        <position position="143"/>
    </location>
    <ligand>
        <name>carbamoyl phosphate</name>
        <dbReference type="ChEBI" id="CHEBI:58228"/>
    </ligand>
</feature>
<feature type="binding site" evidence="1">
    <location>
        <position position="146"/>
    </location>
    <ligand>
        <name>carbamoyl phosphate</name>
        <dbReference type="ChEBI" id="CHEBI:58228"/>
    </ligand>
</feature>
<feature type="binding site" evidence="1">
    <location>
        <position position="176"/>
    </location>
    <ligand>
        <name>L-aspartate</name>
        <dbReference type="ChEBI" id="CHEBI:29991"/>
    </ligand>
</feature>
<feature type="binding site" evidence="1">
    <location>
        <position position="230"/>
    </location>
    <ligand>
        <name>L-aspartate</name>
        <dbReference type="ChEBI" id="CHEBI:29991"/>
    </ligand>
</feature>
<feature type="binding site" evidence="1">
    <location>
        <position position="271"/>
    </location>
    <ligand>
        <name>carbamoyl phosphate</name>
        <dbReference type="ChEBI" id="CHEBI:58228"/>
    </ligand>
</feature>
<feature type="binding site" evidence="1">
    <location>
        <position position="272"/>
    </location>
    <ligand>
        <name>carbamoyl phosphate</name>
        <dbReference type="ChEBI" id="CHEBI:58228"/>
    </ligand>
</feature>
<comment type="function">
    <text evidence="1">Catalyzes the condensation of carbamoyl phosphate and aspartate to form carbamoyl aspartate and inorganic phosphate, the committed step in the de novo pyrimidine nucleotide biosynthesis pathway.</text>
</comment>
<comment type="catalytic activity">
    <reaction evidence="1">
        <text>carbamoyl phosphate + L-aspartate = N-carbamoyl-L-aspartate + phosphate + H(+)</text>
        <dbReference type="Rhea" id="RHEA:20013"/>
        <dbReference type="ChEBI" id="CHEBI:15378"/>
        <dbReference type="ChEBI" id="CHEBI:29991"/>
        <dbReference type="ChEBI" id="CHEBI:32814"/>
        <dbReference type="ChEBI" id="CHEBI:43474"/>
        <dbReference type="ChEBI" id="CHEBI:58228"/>
        <dbReference type="EC" id="2.1.3.2"/>
    </reaction>
</comment>
<comment type="pathway">
    <text evidence="1">Pyrimidine metabolism; UMP biosynthesis via de novo pathway; (S)-dihydroorotate from bicarbonate: step 2/3.</text>
</comment>
<comment type="subunit">
    <text evidence="1">Heterododecamer (2C3:3R2) of six catalytic PyrB chains organized as two trimers (C3), and six regulatory PyrI chains organized as three dimers (R2).</text>
</comment>
<comment type="similarity">
    <text evidence="1">Belongs to the aspartate/ornithine carbamoyltransferase superfamily. ATCase family.</text>
</comment>
<sequence>MTQNTFFPIFPHQHLLGIKDLNVQDLIVLLDRANANIPFSKKIDKKQSPLHGCTQINLFFEASTRTQSSFELAGKRLGADVMSMPIGNSSVKKGETLIDTATTLNAMKPDILVIRHSCAGAAALLAQKVDCCIINAGDGAHEHPTQALLDALTIKRAKGRIEGLTVVICGDILHSRVARSNILSLNALGARVRAVAPSTLLPAGIADMGVEVYNTMKEGLKGADVIMMLRLQRERMTDSFIPSIREYFHYFGLHKENLSYAKSDCIILHPGPINRGIEIASDIADGPQSMIHTQVEMGIAVRMAVMEALLDSRLKASGEKK</sequence>
<proteinExistence type="inferred from homology"/>
<evidence type="ECO:0000255" key="1">
    <source>
        <dbReference type="HAMAP-Rule" id="MF_00001"/>
    </source>
</evidence>
<accession>Q6FZS5</accession>
<reference key="1">
    <citation type="journal article" date="2004" name="Proc. Natl. Acad. Sci. U.S.A.">
        <title>The louse-borne human pathogen Bartonella quintana is a genomic derivative of the zoonotic agent Bartonella henselae.</title>
        <authorList>
            <person name="Alsmark U.C.M."/>
            <person name="Frank A.C."/>
            <person name="Karlberg E.O."/>
            <person name="Legault B.-A."/>
            <person name="Ardell D.H."/>
            <person name="Canbaeck B."/>
            <person name="Eriksson A.-S."/>
            <person name="Naeslund A.K."/>
            <person name="Handley S.A."/>
            <person name="Huvet M."/>
            <person name="La Scola B."/>
            <person name="Holmberg M."/>
            <person name="Andersson S.G.E."/>
        </authorList>
    </citation>
    <scope>NUCLEOTIDE SEQUENCE [LARGE SCALE GENOMIC DNA]</scope>
    <source>
        <strain>Toulouse</strain>
    </source>
</reference>
<organism>
    <name type="scientific">Bartonella quintana (strain Toulouse)</name>
    <name type="common">Rochalimaea quintana</name>
    <dbReference type="NCBI Taxonomy" id="283165"/>
    <lineage>
        <taxon>Bacteria</taxon>
        <taxon>Pseudomonadati</taxon>
        <taxon>Pseudomonadota</taxon>
        <taxon>Alphaproteobacteria</taxon>
        <taxon>Hyphomicrobiales</taxon>
        <taxon>Bartonellaceae</taxon>
        <taxon>Bartonella</taxon>
    </lineage>
</organism>
<gene>
    <name evidence="1" type="primary">pyrB</name>
    <name type="ordered locus">BQ06380</name>
</gene>
<keyword id="KW-0665">Pyrimidine biosynthesis</keyword>
<keyword id="KW-0808">Transferase</keyword>
<dbReference type="EC" id="2.1.3.2" evidence="1"/>
<dbReference type="EMBL" id="BX897700">
    <property type="protein sequence ID" value="CAF26129.1"/>
    <property type="molecule type" value="Genomic_DNA"/>
</dbReference>
<dbReference type="RefSeq" id="WP_011179392.1">
    <property type="nucleotide sequence ID" value="NC_005955.1"/>
</dbReference>
<dbReference type="SMR" id="Q6FZS5"/>
<dbReference type="KEGG" id="bqu:BQ06380"/>
<dbReference type="eggNOG" id="COG0540">
    <property type="taxonomic scope" value="Bacteria"/>
</dbReference>
<dbReference type="HOGENOM" id="CLU_043846_2_0_5"/>
<dbReference type="OrthoDB" id="9774690at2"/>
<dbReference type="UniPathway" id="UPA00070">
    <property type="reaction ID" value="UER00116"/>
</dbReference>
<dbReference type="Proteomes" id="UP000000597">
    <property type="component" value="Chromosome"/>
</dbReference>
<dbReference type="GO" id="GO:0005829">
    <property type="term" value="C:cytosol"/>
    <property type="evidence" value="ECO:0007669"/>
    <property type="project" value="TreeGrafter"/>
</dbReference>
<dbReference type="GO" id="GO:0016597">
    <property type="term" value="F:amino acid binding"/>
    <property type="evidence" value="ECO:0007669"/>
    <property type="project" value="InterPro"/>
</dbReference>
<dbReference type="GO" id="GO:0004070">
    <property type="term" value="F:aspartate carbamoyltransferase activity"/>
    <property type="evidence" value="ECO:0007669"/>
    <property type="project" value="UniProtKB-UniRule"/>
</dbReference>
<dbReference type="GO" id="GO:0006207">
    <property type="term" value="P:'de novo' pyrimidine nucleobase biosynthetic process"/>
    <property type="evidence" value="ECO:0007669"/>
    <property type="project" value="InterPro"/>
</dbReference>
<dbReference type="GO" id="GO:0044205">
    <property type="term" value="P:'de novo' UMP biosynthetic process"/>
    <property type="evidence" value="ECO:0007669"/>
    <property type="project" value="UniProtKB-UniRule"/>
</dbReference>
<dbReference type="GO" id="GO:0006520">
    <property type="term" value="P:amino acid metabolic process"/>
    <property type="evidence" value="ECO:0007669"/>
    <property type="project" value="InterPro"/>
</dbReference>
<dbReference type="FunFam" id="3.40.50.1370:FF:000007">
    <property type="entry name" value="Aspartate carbamoyltransferase"/>
    <property type="match status" value="1"/>
</dbReference>
<dbReference type="Gene3D" id="3.40.50.1370">
    <property type="entry name" value="Aspartate/ornithine carbamoyltransferase"/>
    <property type="match status" value="2"/>
</dbReference>
<dbReference type="HAMAP" id="MF_00001">
    <property type="entry name" value="Asp_carb_tr"/>
    <property type="match status" value="1"/>
</dbReference>
<dbReference type="InterPro" id="IPR006132">
    <property type="entry name" value="Asp/Orn_carbamoyltranf_P-bd"/>
</dbReference>
<dbReference type="InterPro" id="IPR006130">
    <property type="entry name" value="Asp/Orn_carbamoylTrfase"/>
</dbReference>
<dbReference type="InterPro" id="IPR036901">
    <property type="entry name" value="Asp/Orn_carbamoylTrfase_sf"/>
</dbReference>
<dbReference type="InterPro" id="IPR002082">
    <property type="entry name" value="Asp_carbamoyltransf"/>
</dbReference>
<dbReference type="InterPro" id="IPR006131">
    <property type="entry name" value="Asp_carbamoyltransf_Asp/Orn-bd"/>
</dbReference>
<dbReference type="NCBIfam" id="TIGR00670">
    <property type="entry name" value="asp_carb_tr"/>
    <property type="match status" value="1"/>
</dbReference>
<dbReference type="NCBIfam" id="NF002032">
    <property type="entry name" value="PRK00856.1"/>
    <property type="match status" value="1"/>
</dbReference>
<dbReference type="PANTHER" id="PTHR45753:SF6">
    <property type="entry name" value="ASPARTATE CARBAMOYLTRANSFERASE"/>
    <property type="match status" value="1"/>
</dbReference>
<dbReference type="PANTHER" id="PTHR45753">
    <property type="entry name" value="ORNITHINE CARBAMOYLTRANSFERASE, MITOCHONDRIAL"/>
    <property type="match status" value="1"/>
</dbReference>
<dbReference type="Pfam" id="PF00185">
    <property type="entry name" value="OTCace"/>
    <property type="match status" value="1"/>
</dbReference>
<dbReference type="Pfam" id="PF02729">
    <property type="entry name" value="OTCace_N"/>
    <property type="match status" value="1"/>
</dbReference>
<dbReference type="PRINTS" id="PR00100">
    <property type="entry name" value="AOTCASE"/>
</dbReference>
<dbReference type="PRINTS" id="PR00101">
    <property type="entry name" value="ATCASE"/>
</dbReference>
<dbReference type="SUPFAM" id="SSF53671">
    <property type="entry name" value="Aspartate/ornithine carbamoyltransferase"/>
    <property type="match status" value="1"/>
</dbReference>
<dbReference type="PROSITE" id="PS00097">
    <property type="entry name" value="CARBAMOYLTRANSFERASE"/>
    <property type="match status" value="1"/>
</dbReference>
<protein>
    <recommendedName>
        <fullName evidence="1">Aspartate carbamoyltransferase catalytic subunit</fullName>
        <ecNumber evidence="1">2.1.3.2</ecNumber>
    </recommendedName>
    <alternativeName>
        <fullName evidence="1">Aspartate transcarbamylase</fullName>
        <shortName evidence="1">ATCase</shortName>
    </alternativeName>
</protein>